<dbReference type="EC" id="6.1.1.7" evidence="1"/>
<dbReference type="EMBL" id="CP000057">
    <property type="protein sequence ID" value="AAX87861.1"/>
    <property type="molecule type" value="Genomic_DNA"/>
</dbReference>
<dbReference type="RefSeq" id="WP_011272225.1">
    <property type="nucleotide sequence ID" value="NC_007146.2"/>
</dbReference>
<dbReference type="SMR" id="Q4QM86"/>
<dbReference type="GeneID" id="93219855"/>
<dbReference type="KEGG" id="hit:NTHI0978"/>
<dbReference type="HOGENOM" id="CLU_004485_1_1_6"/>
<dbReference type="Proteomes" id="UP000002525">
    <property type="component" value="Chromosome"/>
</dbReference>
<dbReference type="GO" id="GO:0005829">
    <property type="term" value="C:cytosol"/>
    <property type="evidence" value="ECO:0007669"/>
    <property type="project" value="TreeGrafter"/>
</dbReference>
<dbReference type="GO" id="GO:0004813">
    <property type="term" value="F:alanine-tRNA ligase activity"/>
    <property type="evidence" value="ECO:0007669"/>
    <property type="project" value="UniProtKB-UniRule"/>
</dbReference>
<dbReference type="GO" id="GO:0002161">
    <property type="term" value="F:aminoacyl-tRNA deacylase activity"/>
    <property type="evidence" value="ECO:0007669"/>
    <property type="project" value="TreeGrafter"/>
</dbReference>
<dbReference type="GO" id="GO:0005524">
    <property type="term" value="F:ATP binding"/>
    <property type="evidence" value="ECO:0007669"/>
    <property type="project" value="UniProtKB-UniRule"/>
</dbReference>
<dbReference type="GO" id="GO:0000049">
    <property type="term" value="F:tRNA binding"/>
    <property type="evidence" value="ECO:0007669"/>
    <property type="project" value="UniProtKB-KW"/>
</dbReference>
<dbReference type="GO" id="GO:0008270">
    <property type="term" value="F:zinc ion binding"/>
    <property type="evidence" value="ECO:0007669"/>
    <property type="project" value="UniProtKB-UniRule"/>
</dbReference>
<dbReference type="GO" id="GO:0006419">
    <property type="term" value="P:alanyl-tRNA aminoacylation"/>
    <property type="evidence" value="ECO:0007669"/>
    <property type="project" value="UniProtKB-UniRule"/>
</dbReference>
<dbReference type="GO" id="GO:0045892">
    <property type="term" value="P:negative regulation of DNA-templated transcription"/>
    <property type="evidence" value="ECO:0007669"/>
    <property type="project" value="TreeGrafter"/>
</dbReference>
<dbReference type="CDD" id="cd00673">
    <property type="entry name" value="AlaRS_core"/>
    <property type="match status" value="1"/>
</dbReference>
<dbReference type="FunFam" id="2.40.30.130:FF:000001">
    <property type="entry name" value="Alanine--tRNA ligase"/>
    <property type="match status" value="1"/>
</dbReference>
<dbReference type="FunFam" id="3.10.310.40:FF:000001">
    <property type="entry name" value="Alanine--tRNA ligase"/>
    <property type="match status" value="1"/>
</dbReference>
<dbReference type="FunFam" id="3.30.54.20:FF:000001">
    <property type="entry name" value="Alanine--tRNA ligase"/>
    <property type="match status" value="1"/>
</dbReference>
<dbReference type="FunFam" id="3.30.930.10:FF:000004">
    <property type="entry name" value="Alanine--tRNA ligase"/>
    <property type="match status" value="1"/>
</dbReference>
<dbReference type="FunFam" id="3.30.980.10:FF:000004">
    <property type="entry name" value="Alanine--tRNA ligase, cytoplasmic"/>
    <property type="match status" value="1"/>
</dbReference>
<dbReference type="Gene3D" id="2.40.30.130">
    <property type="match status" value="1"/>
</dbReference>
<dbReference type="Gene3D" id="3.10.310.40">
    <property type="match status" value="1"/>
</dbReference>
<dbReference type="Gene3D" id="3.30.54.20">
    <property type="match status" value="1"/>
</dbReference>
<dbReference type="Gene3D" id="6.10.250.550">
    <property type="match status" value="1"/>
</dbReference>
<dbReference type="Gene3D" id="3.30.930.10">
    <property type="entry name" value="Bira Bifunctional Protein, Domain 2"/>
    <property type="match status" value="1"/>
</dbReference>
<dbReference type="Gene3D" id="3.30.980.10">
    <property type="entry name" value="Threonyl-trna Synthetase, Chain A, domain 2"/>
    <property type="match status" value="1"/>
</dbReference>
<dbReference type="HAMAP" id="MF_00036_B">
    <property type="entry name" value="Ala_tRNA_synth_B"/>
    <property type="match status" value="1"/>
</dbReference>
<dbReference type="InterPro" id="IPR045864">
    <property type="entry name" value="aa-tRNA-synth_II/BPL/LPL"/>
</dbReference>
<dbReference type="InterPro" id="IPR002318">
    <property type="entry name" value="Ala-tRNA-lgiase_IIc"/>
</dbReference>
<dbReference type="InterPro" id="IPR018162">
    <property type="entry name" value="Ala-tRNA-ligase_IIc_anticod-bd"/>
</dbReference>
<dbReference type="InterPro" id="IPR018165">
    <property type="entry name" value="Ala-tRNA-synth_IIc_core"/>
</dbReference>
<dbReference type="InterPro" id="IPR018164">
    <property type="entry name" value="Ala-tRNA-synth_IIc_N"/>
</dbReference>
<dbReference type="InterPro" id="IPR050058">
    <property type="entry name" value="Ala-tRNA_ligase"/>
</dbReference>
<dbReference type="InterPro" id="IPR023033">
    <property type="entry name" value="Ala_tRNA_ligase_euk/bac"/>
</dbReference>
<dbReference type="InterPro" id="IPR003156">
    <property type="entry name" value="DHHA1_dom"/>
</dbReference>
<dbReference type="InterPro" id="IPR018163">
    <property type="entry name" value="Thr/Ala-tRNA-synth_IIc_edit"/>
</dbReference>
<dbReference type="InterPro" id="IPR009000">
    <property type="entry name" value="Transl_B-barrel_sf"/>
</dbReference>
<dbReference type="InterPro" id="IPR012947">
    <property type="entry name" value="tRNA_SAD"/>
</dbReference>
<dbReference type="NCBIfam" id="TIGR00344">
    <property type="entry name" value="alaS"/>
    <property type="match status" value="1"/>
</dbReference>
<dbReference type="PANTHER" id="PTHR11777:SF9">
    <property type="entry name" value="ALANINE--TRNA LIGASE, CYTOPLASMIC"/>
    <property type="match status" value="1"/>
</dbReference>
<dbReference type="PANTHER" id="PTHR11777">
    <property type="entry name" value="ALANYL-TRNA SYNTHETASE"/>
    <property type="match status" value="1"/>
</dbReference>
<dbReference type="Pfam" id="PF02272">
    <property type="entry name" value="DHHA1"/>
    <property type="match status" value="1"/>
</dbReference>
<dbReference type="Pfam" id="PF01411">
    <property type="entry name" value="tRNA-synt_2c"/>
    <property type="match status" value="1"/>
</dbReference>
<dbReference type="Pfam" id="PF07973">
    <property type="entry name" value="tRNA_SAD"/>
    <property type="match status" value="1"/>
</dbReference>
<dbReference type="PRINTS" id="PR00980">
    <property type="entry name" value="TRNASYNTHALA"/>
</dbReference>
<dbReference type="SMART" id="SM00863">
    <property type="entry name" value="tRNA_SAD"/>
    <property type="match status" value="1"/>
</dbReference>
<dbReference type="SUPFAM" id="SSF55681">
    <property type="entry name" value="Class II aaRS and biotin synthetases"/>
    <property type="match status" value="1"/>
</dbReference>
<dbReference type="SUPFAM" id="SSF101353">
    <property type="entry name" value="Putative anticodon-binding domain of alanyl-tRNA synthetase (AlaRS)"/>
    <property type="match status" value="1"/>
</dbReference>
<dbReference type="SUPFAM" id="SSF55186">
    <property type="entry name" value="ThrRS/AlaRS common domain"/>
    <property type="match status" value="1"/>
</dbReference>
<dbReference type="SUPFAM" id="SSF50447">
    <property type="entry name" value="Translation proteins"/>
    <property type="match status" value="1"/>
</dbReference>
<dbReference type="PROSITE" id="PS50860">
    <property type="entry name" value="AA_TRNA_LIGASE_II_ALA"/>
    <property type="match status" value="1"/>
</dbReference>
<accession>Q4QM86</accession>
<gene>
    <name evidence="1" type="primary">alaS</name>
    <name type="ordered locus">NTHI0978</name>
</gene>
<feature type="chain" id="PRO_0000075123" description="Alanine--tRNA ligase">
    <location>
        <begin position="1"/>
        <end position="874"/>
    </location>
</feature>
<feature type="binding site" evidence="1">
    <location>
        <position position="563"/>
    </location>
    <ligand>
        <name>Zn(2+)</name>
        <dbReference type="ChEBI" id="CHEBI:29105"/>
    </ligand>
</feature>
<feature type="binding site" evidence="1">
    <location>
        <position position="567"/>
    </location>
    <ligand>
        <name>Zn(2+)</name>
        <dbReference type="ChEBI" id="CHEBI:29105"/>
    </ligand>
</feature>
<feature type="binding site" evidence="1">
    <location>
        <position position="665"/>
    </location>
    <ligand>
        <name>Zn(2+)</name>
        <dbReference type="ChEBI" id="CHEBI:29105"/>
    </ligand>
</feature>
<feature type="binding site" evidence="1">
    <location>
        <position position="669"/>
    </location>
    <ligand>
        <name>Zn(2+)</name>
        <dbReference type="ChEBI" id="CHEBI:29105"/>
    </ligand>
</feature>
<organism>
    <name type="scientific">Haemophilus influenzae (strain 86-028NP)</name>
    <dbReference type="NCBI Taxonomy" id="281310"/>
    <lineage>
        <taxon>Bacteria</taxon>
        <taxon>Pseudomonadati</taxon>
        <taxon>Pseudomonadota</taxon>
        <taxon>Gammaproteobacteria</taxon>
        <taxon>Pasteurellales</taxon>
        <taxon>Pasteurellaceae</taxon>
        <taxon>Haemophilus</taxon>
    </lineage>
</organism>
<protein>
    <recommendedName>
        <fullName evidence="1">Alanine--tRNA ligase</fullName>
        <ecNumber evidence="1">6.1.1.7</ecNumber>
    </recommendedName>
    <alternativeName>
        <fullName evidence="1">Alanyl-tRNA synthetase</fullName>
        <shortName evidence="1">AlaRS</shortName>
    </alternativeName>
</protein>
<keyword id="KW-0030">Aminoacyl-tRNA synthetase</keyword>
<keyword id="KW-0067">ATP-binding</keyword>
<keyword id="KW-0963">Cytoplasm</keyword>
<keyword id="KW-0436">Ligase</keyword>
<keyword id="KW-0479">Metal-binding</keyword>
<keyword id="KW-0547">Nucleotide-binding</keyword>
<keyword id="KW-0648">Protein biosynthesis</keyword>
<keyword id="KW-0694">RNA-binding</keyword>
<keyword id="KW-0820">tRNA-binding</keyword>
<keyword id="KW-0862">Zinc</keyword>
<comment type="function">
    <text evidence="1">Catalyzes the attachment of alanine to tRNA(Ala) in a two-step reaction: alanine is first activated by ATP to form Ala-AMP and then transferred to the acceptor end of tRNA(Ala). Also edits incorrectly charged Ser-tRNA(Ala) and Gly-tRNA(Ala) via its editing domain.</text>
</comment>
<comment type="catalytic activity">
    <reaction evidence="1">
        <text>tRNA(Ala) + L-alanine + ATP = L-alanyl-tRNA(Ala) + AMP + diphosphate</text>
        <dbReference type="Rhea" id="RHEA:12540"/>
        <dbReference type="Rhea" id="RHEA-COMP:9657"/>
        <dbReference type="Rhea" id="RHEA-COMP:9923"/>
        <dbReference type="ChEBI" id="CHEBI:30616"/>
        <dbReference type="ChEBI" id="CHEBI:33019"/>
        <dbReference type="ChEBI" id="CHEBI:57972"/>
        <dbReference type="ChEBI" id="CHEBI:78442"/>
        <dbReference type="ChEBI" id="CHEBI:78497"/>
        <dbReference type="ChEBI" id="CHEBI:456215"/>
        <dbReference type="EC" id="6.1.1.7"/>
    </reaction>
</comment>
<comment type="cofactor">
    <cofactor evidence="1">
        <name>Zn(2+)</name>
        <dbReference type="ChEBI" id="CHEBI:29105"/>
    </cofactor>
    <text evidence="1">Binds 1 zinc ion per subunit.</text>
</comment>
<comment type="subcellular location">
    <subcellularLocation>
        <location evidence="1">Cytoplasm</location>
    </subcellularLocation>
</comment>
<comment type="domain">
    <text evidence="1">Consists of three domains; the N-terminal catalytic domain, the editing domain and the C-terminal C-Ala domain. The editing domain removes incorrectly charged amino acids, while the C-Ala domain, along with tRNA(Ala), serves as a bridge to cooperatively bring together the editing and aminoacylation centers thus stimulating deacylation of misacylated tRNAs.</text>
</comment>
<comment type="similarity">
    <text evidence="1">Belongs to the class-II aminoacyl-tRNA synthetase family.</text>
</comment>
<reference key="1">
    <citation type="journal article" date="2005" name="J. Bacteriol.">
        <title>Genomic sequence of an otitis media isolate of nontypeable Haemophilus influenzae: comparative study with H. influenzae serotype d, strain KW20.</title>
        <authorList>
            <person name="Harrison A."/>
            <person name="Dyer D.W."/>
            <person name="Gillaspy A."/>
            <person name="Ray W.C."/>
            <person name="Mungur R."/>
            <person name="Carson M.B."/>
            <person name="Zhong H."/>
            <person name="Gipson J."/>
            <person name="Gipson M."/>
            <person name="Johnson L.S."/>
            <person name="Lewis L."/>
            <person name="Bakaletz L.O."/>
            <person name="Munson R.S. Jr."/>
        </authorList>
    </citation>
    <scope>NUCLEOTIDE SEQUENCE [LARGE SCALE GENOMIC DNA]</scope>
    <source>
        <strain>86-028NP</strain>
    </source>
</reference>
<name>SYA_HAEI8</name>
<sequence>MKTTAEIRQSFLDFFHSKGHQVVESSSLVPENDPTLLFTNAGMNQFKDVFLGMDKRPYSRATTAQRCVRAGGKHNDLENVGYTARHHTFFEMLGNFSFGDYFKQDAINFAWEYLTSPQWLGLPKEKLWVTVYETDDEAYNIWNKDVGVPAERIIRIGDNKGSPYASDNFWAMGDTGPCGPCTEIFYDHGDHIWGGPPGSPEEDGDRYIEIWNVVFMQFNRLADGTMEKLPRPSVDTGMGLERISAVLQHVNSNYEIDIFKTLIAKTAEIVGATDLTNKSLRVIADHIRSCAYLIADGVIPSNEGRGYVLRRIIRRAVRHGHLLGAKESFFYKLVPTLIEVMAEAGKDVKAKQTNVEKLLRLEEEQFARTLERGLSLLDEALSQVKDGILSGEVAFKLYDTYGFPLDLTADVCRERNITIDEQAFDREMEAQRTRAQAASQFGVDYNSVIRVDGETKFEGYTEVESQAKITALFYDGKSVESIEVGQSAVVILENTPFYAESGGQIGDSGYLSTQGVTFNVKDTQKYGQVFGHIGELTQGSLKVGQSVNAIVDAKRRHNTSLNHSATHLLHAALRQILGLHVVQKGSLVSDKALRFDFAQPEAITKEQLSEIETLVNQKIRANFPVQTDIMDIDSAKAKGAMALFGEKYGDKVRVLTMGDFSIELCGGIHAKRTGDIGLFKIITENAVAAGIRRIEAVTGQNAIDWLHNQQRILTQSADLLKSDVNTLVEKIQQLQDKTKKVEKELQGLKEKAAMQAGSDFVKSAVKINGVSVIAQQLDGIETKSLRVMVDDLKNQLGSGVIAFASILDEKVNLVVGVTNDLTAKIKAGELVNLMAQQVGGKGGGRPDMAMAGGSQPENVAQAIKVAQDWLNKNL</sequence>
<evidence type="ECO:0000255" key="1">
    <source>
        <dbReference type="HAMAP-Rule" id="MF_00036"/>
    </source>
</evidence>
<proteinExistence type="inferred from homology"/>